<organism>
    <name type="scientific">Drosophila melanogaster</name>
    <name type="common">Fruit fly</name>
    <dbReference type="NCBI Taxonomy" id="7227"/>
    <lineage>
        <taxon>Eukaryota</taxon>
        <taxon>Metazoa</taxon>
        <taxon>Ecdysozoa</taxon>
        <taxon>Arthropoda</taxon>
        <taxon>Hexapoda</taxon>
        <taxon>Insecta</taxon>
        <taxon>Pterygota</taxon>
        <taxon>Neoptera</taxon>
        <taxon>Endopterygota</taxon>
        <taxon>Diptera</taxon>
        <taxon>Brachycera</taxon>
        <taxon>Muscomorpha</taxon>
        <taxon>Ephydroidea</taxon>
        <taxon>Drosophilidae</taxon>
        <taxon>Drosophila</taxon>
        <taxon>Sophophora</taxon>
    </lineage>
</organism>
<feature type="chain" id="PRO_0000393979" description="Enolase-phosphatase E1">
    <location>
        <begin position="1"/>
        <end position="256"/>
    </location>
</feature>
<feature type="binding site" evidence="1">
    <location>
        <position position="14"/>
    </location>
    <ligand>
        <name>Mg(2+)</name>
        <dbReference type="ChEBI" id="CHEBI:18420"/>
    </ligand>
</feature>
<feature type="binding site" evidence="1">
    <location>
        <position position="16"/>
    </location>
    <ligand>
        <name>Mg(2+)</name>
        <dbReference type="ChEBI" id="CHEBI:18420"/>
    </ligand>
</feature>
<feature type="binding site" evidence="1">
    <location>
        <begin position="142"/>
        <end position="143"/>
    </location>
    <ligand>
        <name>substrate</name>
    </ligand>
</feature>
<feature type="binding site" evidence="1">
    <location>
        <position position="176"/>
    </location>
    <ligand>
        <name>substrate</name>
    </ligand>
</feature>
<feature type="binding site" evidence="1">
    <location>
        <position position="201"/>
    </location>
    <ligand>
        <name>Mg(2+)</name>
        <dbReference type="ChEBI" id="CHEBI:18420"/>
    </ligand>
</feature>
<sequence length="256" mass="28297">MSSSERVAKVVLVDIEGTTTSISFVHDVLFPYAKQNVEKFLRDSWEEDDIKRIVQDLQQVPQYADYKALLSGPPTEVDVDLIAGFVRYLIDQDLKVTPMKTLQGLIWAQGYANGELKGHVYEDVPAAFEAWRAAGLQIAVYSSGSVAAQKLIFGHSLAGNLQPYLSAYFDTHVGHKQEQQSYKNIAKQLKEDPKQILFLTDIPGEAAAARCAGLQAIILKRPGNAALADDQKTGFELIPDFKPLHNLKVPVNKSQA</sequence>
<keyword id="KW-0028">Amino-acid biosynthesis</keyword>
<keyword id="KW-0963">Cytoplasm</keyword>
<keyword id="KW-0378">Hydrolase</keyword>
<keyword id="KW-0460">Magnesium</keyword>
<keyword id="KW-0479">Metal-binding</keyword>
<keyword id="KW-0486">Methionine biosynthesis</keyword>
<keyword id="KW-0539">Nucleus</keyword>
<keyword id="KW-1185">Reference proteome</keyword>
<gene>
    <name evidence="3" type="primary">Enoph</name>
    <name evidence="3" type="ORF">CG12173</name>
</gene>
<reference key="1">
    <citation type="journal article" date="2000" name="Science">
        <title>The genome sequence of Drosophila melanogaster.</title>
        <authorList>
            <person name="Adams M.D."/>
            <person name="Celniker S.E."/>
            <person name="Holt R.A."/>
            <person name="Evans C.A."/>
            <person name="Gocayne J.D."/>
            <person name="Amanatides P.G."/>
            <person name="Scherer S.E."/>
            <person name="Li P.W."/>
            <person name="Hoskins R.A."/>
            <person name="Galle R.F."/>
            <person name="George R.A."/>
            <person name="Lewis S.E."/>
            <person name="Richards S."/>
            <person name="Ashburner M."/>
            <person name="Henderson S.N."/>
            <person name="Sutton G.G."/>
            <person name="Wortman J.R."/>
            <person name="Yandell M.D."/>
            <person name="Zhang Q."/>
            <person name="Chen L.X."/>
            <person name="Brandon R.C."/>
            <person name="Rogers Y.-H.C."/>
            <person name="Blazej R.G."/>
            <person name="Champe M."/>
            <person name="Pfeiffer B.D."/>
            <person name="Wan K.H."/>
            <person name="Doyle C."/>
            <person name="Baxter E.G."/>
            <person name="Helt G."/>
            <person name="Nelson C.R."/>
            <person name="Miklos G.L.G."/>
            <person name="Abril J.F."/>
            <person name="Agbayani A."/>
            <person name="An H.-J."/>
            <person name="Andrews-Pfannkoch C."/>
            <person name="Baldwin D."/>
            <person name="Ballew R.M."/>
            <person name="Basu A."/>
            <person name="Baxendale J."/>
            <person name="Bayraktaroglu L."/>
            <person name="Beasley E.M."/>
            <person name="Beeson K.Y."/>
            <person name="Benos P.V."/>
            <person name="Berman B.P."/>
            <person name="Bhandari D."/>
            <person name="Bolshakov S."/>
            <person name="Borkova D."/>
            <person name="Botchan M.R."/>
            <person name="Bouck J."/>
            <person name="Brokstein P."/>
            <person name="Brottier P."/>
            <person name="Burtis K.C."/>
            <person name="Busam D.A."/>
            <person name="Butler H."/>
            <person name="Cadieu E."/>
            <person name="Center A."/>
            <person name="Chandra I."/>
            <person name="Cherry J.M."/>
            <person name="Cawley S."/>
            <person name="Dahlke C."/>
            <person name="Davenport L.B."/>
            <person name="Davies P."/>
            <person name="de Pablos B."/>
            <person name="Delcher A."/>
            <person name="Deng Z."/>
            <person name="Mays A.D."/>
            <person name="Dew I."/>
            <person name="Dietz S.M."/>
            <person name="Dodson K."/>
            <person name="Doup L.E."/>
            <person name="Downes M."/>
            <person name="Dugan-Rocha S."/>
            <person name="Dunkov B.C."/>
            <person name="Dunn P."/>
            <person name="Durbin K.J."/>
            <person name="Evangelista C.C."/>
            <person name="Ferraz C."/>
            <person name="Ferriera S."/>
            <person name="Fleischmann W."/>
            <person name="Fosler C."/>
            <person name="Gabrielian A.E."/>
            <person name="Garg N.S."/>
            <person name="Gelbart W.M."/>
            <person name="Glasser K."/>
            <person name="Glodek A."/>
            <person name="Gong F."/>
            <person name="Gorrell J.H."/>
            <person name="Gu Z."/>
            <person name="Guan P."/>
            <person name="Harris M."/>
            <person name="Harris N.L."/>
            <person name="Harvey D.A."/>
            <person name="Heiman T.J."/>
            <person name="Hernandez J.R."/>
            <person name="Houck J."/>
            <person name="Hostin D."/>
            <person name="Houston K.A."/>
            <person name="Howland T.J."/>
            <person name="Wei M.-H."/>
            <person name="Ibegwam C."/>
            <person name="Jalali M."/>
            <person name="Kalush F."/>
            <person name="Karpen G.H."/>
            <person name="Ke Z."/>
            <person name="Kennison J.A."/>
            <person name="Ketchum K.A."/>
            <person name="Kimmel B.E."/>
            <person name="Kodira C.D."/>
            <person name="Kraft C.L."/>
            <person name="Kravitz S."/>
            <person name="Kulp D."/>
            <person name="Lai Z."/>
            <person name="Lasko P."/>
            <person name="Lei Y."/>
            <person name="Levitsky A.A."/>
            <person name="Li J.H."/>
            <person name="Li Z."/>
            <person name="Liang Y."/>
            <person name="Lin X."/>
            <person name="Liu X."/>
            <person name="Mattei B."/>
            <person name="McIntosh T.C."/>
            <person name="McLeod M.P."/>
            <person name="McPherson D."/>
            <person name="Merkulov G."/>
            <person name="Milshina N.V."/>
            <person name="Mobarry C."/>
            <person name="Morris J."/>
            <person name="Moshrefi A."/>
            <person name="Mount S.M."/>
            <person name="Moy M."/>
            <person name="Murphy B."/>
            <person name="Murphy L."/>
            <person name="Muzny D.M."/>
            <person name="Nelson D.L."/>
            <person name="Nelson D.R."/>
            <person name="Nelson K.A."/>
            <person name="Nixon K."/>
            <person name="Nusskern D.R."/>
            <person name="Pacleb J.M."/>
            <person name="Palazzolo M."/>
            <person name="Pittman G.S."/>
            <person name="Pan S."/>
            <person name="Pollard J."/>
            <person name="Puri V."/>
            <person name="Reese M.G."/>
            <person name="Reinert K."/>
            <person name="Remington K."/>
            <person name="Saunders R.D.C."/>
            <person name="Scheeler F."/>
            <person name="Shen H."/>
            <person name="Shue B.C."/>
            <person name="Siden-Kiamos I."/>
            <person name="Simpson M."/>
            <person name="Skupski M.P."/>
            <person name="Smith T.J."/>
            <person name="Spier E."/>
            <person name="Spradling A.C."/>
            <person name="Stapleton M."/>
            <person name="Strong R."/>
            <person name="Sun E."/>
            <person name="Svirskas R."/>
            <person name="Tector C."/>
            <person name="Turner R."/>
            <person name="Venter E."/>
            <person name="Wang A.H."/>
            <person name="Wang X."/>
            <person name="Wang Z.-Y."/>
            <person name="Wassarman D.A."/>
            <person name="Weinstock G.M."/>
            <person name="Weissenbach J."/>
            <person name="Williams S.M."/>
            <person name="Woodage T."/>
            <person name="Worley K.C."/>
            <person name="Wu D."/>
            <person name="Yang S."/>
            <person name="Yao Q.A."/>
            <person name="Ye J."/>
            <person name="Yeh R.-F."/>
            <person name="Zaveri J.S."/>
            <person name="Zhan M."/>
            <person name="Zhang G."/>
            <person name="Zhao Q."/>
            <person name="Zheng L."/>
            <person name="Zheng X.H."/>
            <person name="Zhong F.N."/>
            <person name="Zhong W."/>
            <person name="Zhou X."/>
            <person name="Zhu S.C."/>
            <person name="Zhu X."/>
            <person name="Smith H.O."/>
            <person name="Gibbs R.A."/>
            <person name="Myers E.W."/>
            <person name="Rubin G.M."/>
            <person name="Venter J.C."/>
        </authorList>
    </citation>
    <scope>NUCLEOTIDE SEQUENCE [LARGE SCALE GENOMIC DNA]</scope>
    <source>
        <strain>Berkeley</strain>
    </source>
</reference>
<reference key="2">
    <citation type="journal article" date="2002" name="Genome Biol.">
        <title>Annotation of the Drosophila melanogaster euchromatic genome: a systematic review.</title>
        <authorList>
            <person name="Misra S."/>
            <person name="Crosby M.A."/>
            <person name="Mungall C.J."/>
            <person name="Matthews B.B."/>
            <person name="Campbell K.S."/>
            <person name="Hradecky P."/>
            <person name="Huang Y."/>
            <person name="Kaminker J.S."/>
            <person name="Millburn G.H."/>
            <person name="Prochnik S.E."/>
            <person name="Smith C.D."/>
            <person name="Tupy J.L."/>
            <person name="Whitfield E.J."/>
            <person name="Bayraktaroglu L."/>
            <person name="Berman B.P."/>
            <person name="Bettencourt B.R."/>
            <person name="Celniker S.E."/>
            <person name="de Grey A.D.N.J."/>
            <person name="Drysdale R.A."/>
            <person name="Harris N.L."/>
            <person name="Richter J."/>
            <person name="Russo S."/>
            <person name="Schroeder A.J."/>
            <person name="Shu S.Q."/>
            <person name="Stapleton M."/>
            <person name="Yamada C."/>
            <person name="Ashburner M."/>
            <person name="Gelbart W.M."/>
            <person name="Rubin G.M."/>
            <person name="Lewis S.E."/>
        </authorList>
    </citation>
    <scope>GENOME REANNOTATION</scope>
    <source>
        <strain>Berkeley</strain>
    </source>
</reference>
<reference key="3">
    <citation type="submission" date="2005-05" db="EMBL/GenBank/DDBJ databases">
        <authorList>
            <person name="Stapleton M."/>
            <person name="Carlson J."/>
            <person name="Chavez C."/>
            <person name="Frise E."/>
            <person name="George R."/>
            <person name="Pacleb J."/>
            <person name="Park S."/>
            <person name="Wan K."/>
            <person name="Yu C."/>
            <person name="Celniker S.E."/>
        </authorList>
    </citation>
    <scope>NUCLEOTIDE SEQUENCE [LARGE SCALE MRNA]</scope>
</reference>
<name>ENOPH_DROME</name>
<protein>
    <recommendedName>
        <fullName evidence="1">Enolase-phosphatase E1</fullName>
        <ecNumber evidence="1">3.1.3.77</ecNumber>
    </recommendedName>
    <alternativeName>
        <fullName evidence="1">2,3-diketo-5-methylthio-1-phosphopentane phosphatase</fullName>
    </alternativeName>
</protein>
<accession>Q9VN95</accession>
<accession>Q4V3F1</accession>
<evidence type="ECO:0000255" key="1">
    <source>
        <dbReference type="HAMAP-Rule" id="MF_03117"/>
    </source>
</evidence>
<evidence type="ECO:0000305" key="2"/>
<evidence type="ECO:0000312" key="3">
    <source>
        <dbReference type="FlyBase" id="FBgn0037305"/>
    </source>
</evidence>
<dbReference type="EC" id="3.1.3.77" evidence="1"/>
<dbReference type="EMBL" id="AE014297">
    <property type="protein sequence ID" value="AAF52053.2"/>
    <property type="molecule type" value="Genomic_DNA"/>
</dbReference>
<dbReference type="EMBL" id="BT023405">
    <property type="protein sequence ID" value="AAY55821.1"/>
    <property type="status" value="ALT_INIT"/>
    <property type="molecule type" value="mRNA"/>
</dbReference>
<dbReference type="RefSeq" id="NP_649523.1">
    <property type="nucleotide sequence ID" value="NM_141266.3"/>
</dbReference>
<dbReference type="SMR" id="Q9VN95"/>
<dbReference type="BioGRID" id="65843">
    <property type="interactions" value="1"/>
</dbReference>
<dbReference type="FunCoup" id="Q9VN95">
    <property type="interactions" value="2112"/>
</dbReference>
<dbReference type="IntAct" id="Q9VN95">
    <property type="interactions" value="2"/>
</dbReference>
<dbReference type="STRING" id="7227.FBpp0078463"/>
<dbReference type="PaxDb" id="7227-FBpp0289893"/>
<dbReference type="DNASU" id="40630"/>
<dbReference type="EnsemblMetazoa" id="FBtr0078821">
    <property type="protein sequence ID" value="FBpp0078463"/>
    <property type="gene ID" value="FBgn0037305"/>
</dbReference>
<dbReference type="GeneID" id="40630"/>
<dbReference type="KEGG" id="dme:Dmel_CG12173"/>
<dbReference type="UCSC" id="CG12173-RA">
    <property type="organism name" value="d. melanogaster"/>
</dbReference>
<dbReference type="AGR" id="FB:FBgn0037305"/>
<dbReference type="CTD" id="40630"/>
<dbReference type="FlyBase" id="FBgn0037305">
    <property type="gene designation" value="Enoph"/>
</dbReference>
<dbReference type="VEuPathDB" id="VectorBase:FBgn0037305"/>
<dbReference type="eggNOG" id="KOG2630">
    <property type="taxonomic scope" value="Eukaryota"/>
</dbReference>
<dbReference type="GeneTree" id="ENSGT00440000039914"/>
<dbReference type="HOGENOM" id="CLU_023273_0_0_1"/>
<dbReference type="InParanoid" id="Q9VN95"/>
<dbReference type="OMA" id="LQGMVWE"/>
<dbReference type="OrthoDB" id="272500at2759"/>
<dbReference type="PhylomeDB" id="Q9VN95"/>
<dbReference type="Reactome" id="R-DME-1237112">
    <property type="pathway name" value="Methionine salvage pathway"/>
</dbReference>
<dbReference type="UniPathway" id="UPA00904">
    <property type="reaction ID" value="UER00876"/>
</dbReference>
<dbReference type="UniPathway" id="UPA00904">
    <property type="reaction ID" value="UER00877"/>
</dbReference>
<dbReference type="BioGRID-ORCS" id="40630">
    <property type="hits" value="0 hits in 3 CRISPR screens"/>
</dbReference>
<dbReference type="GenomeRNAi" id="40630"/>
<dbReference type="PRO" id="PR:Q9VN95"/>
<dbReference type="Proteomes" id="UP000000803">
    <property type="component" value="Chromosome 3R"/>
</dbReference>
<dbReference type="Bgee" id="FBgn0037305">
    <property type="expression patterns" value="Expressed in adult Malpighian tubule (Drosophila) and 102 other cell types or tissues"/>
</dbReference>
<dbReference type="ExpressionAtlas" id="Q9VN95">
    <property type="expression patterns" value="baseline and differential"/>
</dbReference>
<dbReference type="GO" id="GO:0005737">
    <property type="term" value="C:cytoplasm"/>
    <property type="evidence" value="ECO:0007669"/>
    <property type="project" value="UniProtKB-SubCell"/>
</dbReference>
<dbReference type="GO" id="GO:0005634">
    <property type="term" value="C:nucleus"/>
    <property type="evidence" value="ECO:0007669"/>
    <property type="project" value="UniProtKB-SubCell"/>
</dbReference>
<dbReference type="GO" id="GO:0043874">
    <property type="term" value="F:acireductone synthase activity"/>
    <property type="evidence" value="ECO:0000318"/>
    <property type="project" value="GO_Central"/>
</dbReference>
<dbReference type="GO" id="GO:0000287">
    <property type="term" value="F:magnesium ion binding"/>
    <property type="evidence" value="ECO:0007669"/>
    <property type="project" value="UniProtKB-UniRule"/>
</dbReference>
<dbReference type="GO" id="GO:0019509">
    <property type="term" value="P:L-methionine salvage from methylthioadenosine"/>
    <property type="evidence" value="ECO:0000318"/>
    <property type="project" value="GO_Central"/>
</dbReference>
<dbReference type="CDD" id="cd01629">
    <property type="entry name" value="HAD_EP"/>
    <property type="match status" value="1"/>
</dbReference>
<dbReference type="FunFam" id="1.10.720.60:FF:000007">
    <property type="entry name" value="Enolase-phosphatase E1"/>
    <property type="match status" value="1"/>
</dbReference>
<dbReference type="FunFam" id="3.40.50.1000:FF:000079">
    <property type="entry name" value="Enolase-phosphatase E1"/>
    <property type="match status" value="1"/>
</dbReference>
<dbReference type="Gene3D" id="1.10.720.60">
    <property type="match status" value="1"/>
</dbReference>
<dbReference type="Gene3D" id="3.40.50.1000">
    <property type="entry name" value="HAD superfamily/HAD-like"/>
    <property type="match status" value="1"/>
</dbReference>
<dbReference type="HAMAP" id="MF_01681">
    <property type="entry name" value="Salvage_MtnC"/>
    <property type="match status" value="1"/>
</dbReference>
<dbReference type="HAMAP" id="MF_03117">
    <property type="entry name" value="Salvage_MtnC_euk"/>
    <property type="match status" value="1"/>
</dbReference>
<dbReference type="InterPro" id="IPR023943">
    <property type="entry name" value="Enolase-ppase_E1"/>
</dbReference>
<dbReference type="InterPro" id="IPR027511">
    <property type="entry name" value="ENOPH1_eukaryotes"/>
</dbReference>
<dbReference type="InterPro" id="IPR036412">
    <property type="entry name" value="HAD-like_sf"/>
</dbReference>
<dbReference type="InterPro" id="IPR006439">
    <property type="entry name" value="HAD-SF_hydro_IA"/>
</dbReference>
<dbReference type="InterPro" id="IPR023214">
    <property type="entry name" value="HAD_sf"/>
</dbReference>
<dbReference type="NCBIfam" id="TIGR01691">
    <property type="entry name" value="enolase-ppase"/>
    <property type="match status" value="1"/>
</dbReference>
<dbReference type="NCBIfam" id="TIGR01549">
    <property type="entry name" value="HAD-SF-IA-v1"/>
    <property type="match status" value="1"/>
</dbReference>
<dbReference type="PANTHER" id="PTHR20371">
    <property type="entry name" value="ENOLASE-PHOSPHATASE E1"/>
    <property type="match status" value="1"/>
</dbReference>
<dbReference type="PANTHER" id="PTHR20371:SF1">
    <property type="entry name" value="ENOLASE-PHOSPHATASE E1"/>
    <property type="match status" value="1"/>
</dbReference>
<dbReference type="Pfam" id="PF00702">
    <property type="entry name" value="Hydrolase"/>
    <property type="match status" value="1"/>
</dbReference>
<dbReference type="PRINTS" id="PR00413">
    <property type="entry name" value="HADHALOGNASE"/>
</dbReference>
<dbReference type="SFLD" id="SFLDF00044">
    <property type="entry name" value="enolase-phosphatase"/>
    <property type="match status" value="1"/>
</dbReference>
<dbReference type="SFLD" id="SFLDS00003">
    <property type="entry name" value="Haloacid_Dehalogenase"/>
    <property type="match status" value="1"/>
</dbReference>
<dbReference type="SUPFAM" id="SSF56784">
    <property type="entry name" value="HAD-like"/>
    <property type="match status" value="1"/>
</dbReference>
<comment type="function">
    <text evidence="1">Bifunctional enzyme that catalyzes the enolization of 2,3-diketo-5-methylthiopentyl-1-phosphate (DK-MTP-1-P) into the intermediate 2-hydroxy-3-keto-5-methylthiopentenyl-1-phosphate (HK-MTPenyl-1-P), which is then dephosphorylated to form the acireductone 1,2-dihydroxy-3-keto-5-methylthiopentene (DHK-MTPene).</text>
</comment>
<comment type="catalytic activity">
    <reaction evidence="1">
        <text>5-methylsulfanyl-2,3-dioxopentyl phosphate + H2O = 1,2-dihydroxy-5-(methylsulfanyl)pent-1-en-3-one + phosphate</text>
        <dbReference type="Rhea" id="RHEA:21700"/>
        <dbReference type="ChEBI" id="CHEBI:15377"/>
        <dbReference type="ChEBI" id="CHEBI:43474"/>
        <dbReference type="ChEBI" id="CHEBI:49252"/>
        <dbReference type="ChEBI" id="CHEBI:58828"/>
        <dbReference type="EC" id="3.1.3.77"/>
    </reaction>
</comment>
<comment type="cofactor">
    <cofactor evidence="1">
        <name>Mg(2+)</name>
        <dbReference type="ChEBI" id="CHEBI:18420"/>
    </cofactor>
    <text evidence="1">Binds 1 Mg(2+) ion per subunit.</text>
</comment>
<comment type="pathway">
    <text evidence="1">Amino-acid biosynthesis; L-methionine biosynthesis via salvage pathway; L-methionine from S-methyl-5-thio-alpha-D-ribose 1-phosphate: step 3/6.</text>
</comment>
<comment type="pathway">
    <text evidence="1">Amino-acid biosynthesis; L-methionine biosynthesis via salvage pathway; L-methionine from S-methyl-5-thio-alpha-D-ribose 1-phosphate: step 4/6.</text>
</comment>
<comment type="subunit">
    <text evidence="1">Monomer.</text>
</comment>
<comment type="subcellular location">
    <subcellularLocation>
        <location evidence="1">Cytoplasm</location>
    </subcellularLocation>
    <subcellularLocation>
        <location evidence="1">Nucleus</location>
    </subcellularLocation>
</comment>
<comment type="similarity">
    <text evidence="1">Belongs to the HAD-like hydrolase superfamily. MasA/MtnC family.</text>
</comment>
<comment type="sequence caution" evidence="2">
    <conflict type="erroneous initiation">
        <sequence resource="EMBL-CDS" id="AAY55821"/>
    </conflict>
    <text>Extended N-terminus.</text>
</comment>
<proteinExistence type="evidence at transcript level"/>